<protein>
    <recommendedName>
        <fullName evidence="1">Urease accessory protein UreE</fullName>
    </recommendedName>
</protein>
<dbReference type="EMBL" id="CP000031">
    <property type="protein sequence ID" value="AAV94997.1"/>
    <property type="molecule type" value="Genomic_DNA"/>
</dbReference>
<dbReference type="RefSeq" id="WP_011047450.1">
    <property type="nucleotide sequence ID" value="NC_003911.12"/>
</dbReference>
<dbReference type="SMR" id="Q5LSQ1"/>
<dbReference type="STRING" id="246200.SPO1715"/>
<dbReference type="PaxDb" id="246200-SPO1715"/>
<dbReference type="KEGG" id="sil:SPO1715"/>
<dbReference type="eggNOG" id="COG2371">
    <property type="taxonomic scope" value="Bacteria"/>
</dbReference>
<dbReference type="HOGENOM" id="CLU_093757_1_0_5"/>
<dbReference type="OrthoDB" id="9802215at2"/>
<dbReference type="Proteomes" id="UP000001023">
    <property type="component" value="Chromosome"/>
</dbReference>
<dbReference type="GO" id="GO:0005737">
    <property type="term" value="C:cytoplasm"/>
    <property type="evidence" value="ECO:0007669"/>
    <property type="project" value="UniProtKB-SubCell"/>
</dbReference>
<dbReference type="GO" id="GO:0016151">
    <property type="term" value="F:nickel cation binding"/>
    <property type="evidence" value="ECO:0007669"/>
    <property type="project" value="UniProtKB-UniRule"/>
</dbReference>
<dbReference type="GO" id="GO:0051082">
    <property type="term" value="F:unfolded protein binding"/>
    <property type="evidence" value="ECO:0007669"/>
    <property type="project" value="UniProtKB-UniRule"/>
</dbReference>
<dbReference type="GO" id="GO:0006457">
    <property type="term" value="P:protein folding"/>
    <property type="evidence" value="ECO:0007669"/>
    <property type="project" value="InterPro"/>
</dbReference>
<dbReference type="GO" id="GO:0065003">
    <property type="term" value="P:protein-containing complex assembly"/>
    <property type="evidence" value="ECO:0007669"/>
    <property type="project" value="InterPro"/>
</dbReference>
<dbReference type="GO" id="GO:0019627">
    <property type="term" value="P:urea metabolic process"/>
    <property type="evidence" value="ECO:0007669"/>
    <property type="project" value="InterPro"/>
</dbReference>
<dbReference type="CDD" id="cd00571">
    <property type="entry name" value="UreE"/>
    <property type="match status" value="1"/>
</dbReference>
<dbReference type="Gene3D" id="2.60.260.20">
    <property type="entry name" value="Urease metallochaperone UreE, N-terminal domain"/>
    <property type="match status" value="1"/>
</dbReference>
<dbReference type="Gene3D" id="3.30.70.790">
    <property type="entry name" value="UreE, C-terminal domain"/>
    <property type="match status" value="1"/>
</dbReference>
<dbReference type="HAMAP" id="MF_00822">
    <property type="entry name" value="UreE"/>
    <property type="match status" value="1"/>
</dbReference>
<dbReference type="InterPro" id="IPR012406">
    <property type="entry name" value="UreE"/>
</dbReference>
<dbReference type="InterPro" id="IPR007864">
    <property type="entry name" value="UreE_C_dom"/>
</dbReference>
<dbReference type="InterPro" id="IPR004029">
    <property type="entry name" value="UreE_N"/>
</dbReference>
<dbReference type="InterPro" id="IPR036118">
    <property type="entry name" value="UreE_N_sf"/>
</dbReference>
<dbReference type="NCBIfam" id="NF009758">
    <property type="entry name" value="PRK13261.2-4"/>
    <property type="match status" value="1"/>
</dbReference>
<dbReference type="Pfam" id="PF05194">
    <property type="entry name" value="UreE_C"/>
    <property type="match status" value="1"/>
</dbReference>
<dbReference type="Pfam" id="PF02814">
    <property type="entry name" value="UreE_N"/>
    <property type="match status" value="1"/>
</dbReference>
<dbReference type="PIRSF" id="PIRSF036402">
    <property type="entry name" value="Ureas_acces_UreE"/>
    <property type="match status" value="1"/>
</dbReference>
<dbReference type="SMART" id="SM00988">
    <property type="entry name" value="UreE_N"/>
    <property type="match status" value="1"/>
</dbReference>
<dbReference type="SUPFAM" id="SSF69737">
    <property type="entry name" value="Urease metallochaperone UreE, C-terminal domain"/>
    <property type="match status" value="1"/>
</dbReference>
<dbReference type="SUPFAM" id="SSF69287">
    <property type="entry name" value="Urease metallochaperone UreE, N-terminal domain"/>
    <property type="match status" value="1"/>
</dbReference>
<evidence type="ECO:0000255" key="1">
    <source>
        <dbReference type="HAMAP-Rule" id="MF_00822"/>
    </source>
</evidence>
<accession>Q5LSQ1</accession>
<gene>
    <name evidence="1" type="primary">ureE</name>
    <name type="ordered locus">SPO1715</name>
</gene>
<organism>
    <name type="scientific">Ruegeria pomeroyi (strain ATCC 700808 / DSM 15171 / DSS-3)</name>
    <name type="common">Silicibacter pomeroyi</name>
    <dbReference type="NCBI Taxonomy" id="246200"/>
    <lineage>
        <taxon>Bacteria</taxon>
        <taxon>Pseudomonadati</taxon>
        <taxon>Pseudomonadota</taxon>
        <taxon>Alphaproteobacteria</taxon>
        <taxon>Rhodobacterales</taxon>
        <taxon>Roseobacteraceae</taxon>
        <taxon>Ruegeria</taxon>
    </lineage>
</organism>
<sequence length="149" mass="16983">MDLPACRDIRRTGHWSEADDRVTLSYDDRFLRRKRLITVQDKAFLVDLAHTTSLEHGDAFQLEDGRLIECIAADEDLLEVTGPDLTRLAWHIGNRHTPCQIEENRLLIQRDHVIQDMLSQIGATLREVVEPFTPEGGAYGHGRTHGHAH</sequence>
<keyword id="KW-0143">Chaperone</keyword>
<keyword id="KW-0963">Cytoplasm</keyword>
<keyword id="KW-0533">Nickel</keyword>
<keyword id="KW-0996">Nickel insertion</keyword>
<keyword id="KW-1185">Reference proteome</keyword>
<proteinExistence type="inferred from homology"/>
<feature type="chain" id="PRO_0000223436" description="Urease accessory protein UreE">
    <location>
        <begin position="1"/>
        <end position="149"/>
    </location>
</feature>
<reference key="1">
    <citation type="journal article" date="2004" name="Nature">
        <title>Genome sequence of Silicibacter pomeroyi reveals adaptations to the marine environment.</title>
        <authorList>
            <person name="Moran M.A."/>
            <person name="Buchan A."/>
            <person name="Gonzalez J.M."/>
            <person name="Heidelberg J.F."/>
            <person name="Whitman W.B."/>
            <person name="Kiene R.P."/>
            <person name="Henriksen J.R."/>
            <person name="King G.M."/>
            <person name="Belas R."/>
            <person name="Fuqua C."/>
            <person name="Brinkac L.M."/>
            <person name="Lewis M."/>
            <person name="Johri S."/>
            <person name="Weaver B."/>
            <person name="Pai G."/>
            <person name="Eisen J.A."/>
            <person name="Rahe E."/>
            <person name="Sheldon W.M."/>
            <person name="Ye W."/>
            <person name="Miller T.R."/>
            <person name="Carlton J."/>
            <person name="Rasko D.A."/>
            <person name="Paulsen I.T."/>
            <person name="Ren Q."/>
            <person name="Daugherty S.C."/>
            <person name="DeBoy R.T."/>
            <person name="Dodson R.J."/>
            <person name="Durkin A.S."/>
            <person name="Madupu R."/>
            <person name="Nelson W.C."/>
            <person name="Sullivan S.A."/>
            <person name="Rosovitz M.J."/>
            <person name="Haft D.H."/>
            <person name="Selengut J."/>
            <person name="Ward N."/>
        </authorList>
    </citation>
    <scope>NUCLEOTIDE SEQUENCE [LARGE SCALE GENOMIC DNA]</scope>
    <source>
        <strain>ATCC 700808 / DSM 15171 / DSS-3</strain>
    </source>
</reference>
<reference key="2">
    <citation type="journal article" date="2014" name="Stand. Genomic Sci.">
        <title>An updated genome annotation for the model marine bacterium Ruegeria pomeroyi DSS-3.</title>
        <authorList>
            <person name="Rivers A.R."/>
            <person name="Smith C.B."/>
            <person name="Moran M.A."/>
        </authorList>
    </citation>
    <scope>GENOME REANNOTATION</scope>
    <source>
        <strain>ATCC 700808 / DSM 15171 / DSS-3</strain>
    </source>
</reference>
<comment type="function">
    <text evidence="1">Involved in urease metallocenter assembly. Binds nickel. Probably functions as a nickel donor during metallocenter assembly.</text>
</comment>
<comment type="subcellular location">
    <subcellularLocation>
        <location evidence="1">Cytoplasm</location>
    </subcellularLocation>
</comment>
<comment type="similarity">
    <text evidence="1">Belongs to the UreE family.</text>
</comment>
<name>UREE_RUEPO</name>